<keyword id="KW-0067">ATP-binding</keyword>
<keyword id="KW-0315">Glutamine amidotransferase</keyword>
<keyword id="KW-0436">Ligase</keyword>
<keyword id="KW-0460">Magnesium</keyword>
<keyword id="KW-0479">Metal-binding</keyword>
<keyword id="KW-0547">Nucleotide-binding</keyword>
<keyword id="KW-0665">Pyrimidine biosynthesis</keyword>
<keyword id="KW-1185">Reference proteome</keyword>
<comment type="function">
    <text evidence="1">Catalyzes the ATP-dependent amination of UTP to CTP with either L-glutamine or ammonia as the source of nitrogen. Regulates intracellular CTP levels through interactions with the four ribonucleotide triphosphates.</text>
</comment>
<comment type="catalytic activity">
    <reaction evidence="1">
        <text>UTP + L-glutamine + ATP + H2O = CTP + L-glutamate + ADP + phosphate + 2 H(+)</text>
        <dbReference type="Rhea" id="RHEA:26426"/>
        <dbReference type="ChEBI" id="CHEBI:15377"/>
        <dbReference type="ChEBI" id="CHEBI:15378"/>
        <dbReference type="ChEBI" id="CHEBI:29985"/>
        <dbReference type="ChEBI" id="CHEBI:30616"/>
        <dbReference type="ChEBI" id="CHEBI:37563"/>
        <dbReference type="ChEBI" id="CHEBI:43474"/>
        <dbReference type="ChEBI" id="CHEBI:46398"/>
        <dbReference type="ChEBI" id="CHEBI:58359"/>
        <dbReference type="ChEBI" id="CHEBI:456216"/>
        <dbReference type="EC" id="6.3.4.2"/>
    </reaction>
</comment>
<comment type="catalytic activity">
    <reaction evidence="1">
        <text>L-glutamine + H2O = L-glutamate + NH4(+)</text>
        <dbReference type="Rhea" id="RHEA:15889"/>
        <dbReference type="ChEBI" id="CHEBI:15377"/>
        <dbReference type="ChEBI" id="CHEBI:28938"/>
        <dbReference type="ChEBI" id="CHEBI:29985"/>
        <dbReference type="ChEBI" id="CHEBI:58359"/>
    </reaction>
</comment>
<comment type="catalytic activity">
    <reaction evidence="1">
        <text>UTP + NH4(+) + ATP = CTP + ADP + phosphate + 2 H(+)</text>
        <dbReference type="Rhea" id="RHEA:16597"/>
        <dbReference type="ChEBI" id="CHEBI:15378"/>
        <dbReference type="ChEBI" id="CHEBI:28938"/>
        <dbReference type="ChEBI" id="CHEBI:30616"/>
        <dbReference type="ChEBI" id="CHEBI:37563"/>
        <dbReference type="ChEBI" id="CHEBI:43474"/>
        <dbReference type="ChEBI" id="CHEBI:46398"/>
        <dbReference type="ChEBI" id="CHEBI:456216"/>
    </reaction>
</comment>
<comment type="activity regulation">
    <text evidence="1">Allosterically activated by GTP, when glutamine is the substrate; GTP has no effect on the reaction when ammonia is the substrate. The allosteric effector GTP functions by stabilizing the protein conformation that binds the tetrahedral intermediate(s) formed during glutamine hydrolysis. Inhibited by the product CTP, via allosteric rather than competitive inhibition.</text>
</comment>
<comment type="pathway">
    <text evidence="1">Pyrimidine metabolism; CTP biosynthesis via de novo pathway; CTP from UDP: step 2/2.</text>
</comment>
<comment type="subunit">
    <text evidence="1">Homotetramer.</text>
</comment>
<comment type="miscellaneous">
    <text evidence="1">CTPSs have evolved a hybrid strategy for distinguishing between UTP and CTP. The overlapping regions of the product feedback inhibitory and substrate sites recognize a common feature in both compounds, the triphosphate moiety. To differentiate isosteric substrate and product pyrimidine rings, an additional pocket far from the expected kinase/ligase catalytic site, specifically recognizes the cytosine and ribose portions of the product inhibitor.</text>
</comment>
<comment type="similarity">
    <text evidence="1">Belongs to the CTP synthase family.</text>
</comment>
<dbReference type="EC" id="6.3.4.2" evidence="1"/>
<dbReference type="EMBL" id="CP001287">
    <property type="protein sequence ID" value="ACK64637.1"/>
    <property type="molecule type" value="Genomic_DNA"/>
</dbReference>
<dbReference type="RefSeq" id="WP_012593914.1">
    <property type="nucleotide sequence ID" value="NC_011726.1"/>
</dbReference>
<dbReference type="SMR" id="B7JVR6"/>
<dbReference type="STRING" id="41431.PCC8801_0546"/>
<dbReference type="MEROPS" id="C26.964"/>
<dbReference type="KEGG" id="cyp:PCC8801_0546"/>
<dbReference type="eggNOG" id="COG0504">
    <property type="taxonomic scope" value="Bacteria"/>
</dbReference>
<dbReference type="HOGENOM" id="CLU_011675_5_0_3"/>
<dbReference type="OrthoDB" id="9801107at2"/>
<dbReference type="UniPathway" id="UPA00159">
    <property type="reaction ID" value="UER00277"/>
</dbReference>
<dbReference type="Proteomes" id="UP000008204">
    <property type="component" value="Chromosome"/>
</dbReference>
<dbReference type="GO" id="GO:0005829">
    <property type="term" value="C:cytosol"/>
    <property type="evidence" value="ECO:0007669"/>
    <property type="project" value="TreeGrafter"/>
</dbReference>
<dbReference type="GO" id="GO:0005524">
    <property type="term" value="F:ATP binding"/>
    <property type="evidence" value="ECO:0007669"/>
    <property type="project" value="UniProtKB-KW"/>
</dbReference>
<dbReference type="GO" id="GO:0003883">
    <property type="term" value="F:CTP synthase activity"/>
    <property type="evidence" value="ECO:0007669"/>
    <property type="project" value="UniProtKB-UniRule"/>
</dbReference>
<dbReference type="GO" id="GO:0004359">
    <property type="term" value="F:glutaminase activity"/>
    <property type="evidence" value="ECO:0007669"/>
    <property type="project" value="RHEA"/>
</dbReference>
<dbReference type="GO" id="GO:0042802">
    <property type="term" value="F:identical protein binding"/>
    <property type="evidence" value="ECO:0007669"/>
    <property type="project" value="TreeGrafter"/>
</dbReference>
<dbReference type="GO" id="GO:0046872">
    <property type="term" value="F:metal ion binding"/>
    <property type="evidence" value="ECO:0007669"/>
    <property type="project" value="UniProtKB-KW"/>
</dbReference>
<dbReference type="GO" id="GO:0044210">
    <property type="term" value="P:'de novo' CTP biosynthetic process"/>
    <property type="evidence" value="ECO:0007669"/>
    <property type="project" value="UniProtKB-UniRule"/>
</dbReference>
<dbReference type="GO" id="GO:0019856">
    <property type="term" value="P:pyrimidine nucleobase biosynthetic process"/>
    <property type="evidence" value="ECO:0007669"/>
    <property type="project" value="TreeGrafter"/>
</dbReference>
<dbReference type="CDD" id="cd03113">
    <property type="entry name" value="CTPS_N"/>
    <property type="match status" value="1"/>
</dbReference>
<dbReference type="CDD" id="cd01746">
    <property type="entry name" value="GATase1_CTP_Synthase"/>
    <property type="match status" value="1"/>
</dbReference>
<dbReference type="FunFam" id="3.40.50.300:FF:000009">
    <property type="entry name" value="CTP synthase"/>
    <property type="match status" value="1"/>
</dbReference>
<dbReference type="FunFam" id="3.40.50.880:FF:000002">
    <property type="entry name" value="CTP synthase"/>
    <property type="match status" value="1"/>
</dbReference>
<dbReference type="Gene3D" id="3.40.50.880">
    <property type="match status" value="1"/>
</dbReference>
<dbReference type="Gene3D" id="3.40.50.300">
    <property type="entry name" value="P-loop containing nucleotide triphosphate hydrolases"/>
    <property type="match status" value="1"/>
</dbReference>
<dbReference type="HAMAP" id="MF_01227">
    <property type="entry name" value="PyrG"/>
    <property type="match status" value="1"/>
</dbReference>
<dbReference type="InterPro" id="IPR029062">
    <property type="entry name" value="Class_I_gatase-like"/>
</dbReference>
<dbReference type="InterPro" id="IPR004468">
    <property type="entry name" value="CTP_synthase"/>
</dbReference>
<dbReference type="InterPro" id="IPR017456">
    <property type="entry name" value="CTP_synthase_N"/>
</dbReference>
<dbReference type="InterPro" id="IPR017926">
    <property type="entry name" value="GATASE"/>
</dbReference>
<dbReference type="InterPro" id="IPR033828">
    <property type="entry name" value="GATase1_CTP_Synthase"/>
</dbReference>
<dbReference type="InterPro" id="IPR027417">
    <property type="entry name" value="P-loop_NTPase"/>
</dbReference>
<dbReference type="NCBIfam" id="NF003792">
    <property type="entry name" value="PRK05380.1"/>
    <property type="match status" value="1"/>
</dbReference>
<dbReference type="NCBIfam" id="TIGR00337">
    <property type="entry name" value="PyrG"/>
    <property type="match status" value="1"/>
</dbReference>
<dbReference type="PANTHER" id="PTHR11550">
    <property type="entry name" value="CTP SYNTHASE"/>
    <property type="match status" value="1"/>
</dbReference>
<dbReference type="PANTHER" id="PTHR11550:SF0">
    <property type="entry name" value="CTP SYNTHASE-RELATED"/>
    <property type="match status" value="1"/>
</dbReference>
<dbReference type="Pfam" id="PF06418">
    <property type="entry name" value="CTP_synth_N"/>
    <property type="match status" value="1"/>
</dbReference>
<dbReference type="Pfam" id="PF00117">
    <property type="entry name" value="GATase"/>
    <property type="match status" value="1"/>
</dbReference>
<dbReference type="SUPFAM" id="SSF52317">
    <property type="entry name" value="Class I glutamine amidotransferase-like"/>
    <property type="match status" value="1"/>
</dbReference>
<dbReference type="SUPFAM" id="SSF52540">
    <property type="entry name" value="P-loop containing nucleoside triphosphate hydrolases"/>
    <property type="match status" value="1"/>
</dbReference>
<dbReference type="PROSITE" id="PS51273">
    <property type="entry name" value="GATASE_TYPE_1"/>
    <property type="match status" value="1"/>
</dbReference>
<accession>B7JVR6</accession>
<gene>
    <name evidence="1" type="primary">pyrG</name>
    <name type="ordered locus">PCC8801_0546</name>
</gene>
<proteinExistence type="inferred from homology"/>
<reference key="1">
    <citation type="journal article" date="2011" name="MBio">
        <title>Novel metabolic attributes of the genus Cyanothece, comprising a group of unicellular nitrogen-fixing Cyanobacteria.</title>
        <authorList>
            <person name="Bandyopadhyay A."/>
            <person name="Elvitigala T."/>
            <person name="Welsh E."/>
            <person name="Stockel J."/>
            <person name="Liberton M."/>
            <person name="Min H."/>
            <person name="Sherman L.A."/>
            <person name="Pakrasi H.B."/>
        </authorList>
    </citation>
    <scope>NUCLEOTIDE SEQUENCE [LARGE SCALE GENOMIC DNA]</scope>
    <source>
        <strain>PCC 8801 / RF-1</strain>
    </source>
</reference>
<organism>
    <name type="scientific">Rippkaea orientalis (strain PCC 8801 / RF-1)</name>
    <name type="common">Cyanothece sp. (strain PCC 8801)</name>
    <dbReference type="NCBI Taxonomy" id="41431"/>
    <lineage>
        <taxon>Bacteria</taxon>
        <taxon>Bacillati</taxon>
        <taxon>Cyanobacteriota</taxon>
        <taxon>Cyanophyceae</taxon>
        <taxon>Oscillatoriophycideae</taxon>
        <taxon>Chroococcales</taxon>
        <taxon>Aphanothecaceae</taxon>
        <taxon>Rippkaea</taxon>
        <taxon>Rippkaea orientalis</taxon>
    </lineage>
</organism>
<sequence length="547" mass="61054">MTKFVFVTGGVVSSIGKGIVAASLGRLLKSRNYSVSILKLDPYINVDPGTMSPFQHGEVFVTEDGAETDLDLGHYERFTDTSMSRLNSVTTGSIYQAVINKERRGAYMGGTVQVIPHITNEIKERIHRVAKNTNPDVVITEIGGTVGDIESLPFLEAIRQFRKDVGRNNVVYMHVTLIPWIPAAREMKTKPTQHSVKELRSIGIQPDVLVCRCDRPLKEGMKEKLSEFCDVPVESVITAQDASSIYEVPLIVEREGLAQQTLALLNLEPRQPNLTDWQTLVQRMQTPQRQIEIALVGKYVQLSDAYLSVVESLVHGGIAVNSEVKLNWVNAEDIEQYGAEKFLKDVSGILVPGGFGIRGVDGKVQAIQYARQQKIPFLGLCLGMQCAVIEWARNIARLERSNSAEFDPETPNPVINLLPEQEDVVDLGGTMRLGLYACRLSPDTLASSLYPQEVIYERHRHRYEFNNAYRSLLIETGYVVSGTSPDGRLVEIIELPGHPFFIATQFHPEFQSRPNSPHPLFLGFVKAAVDHYSTCLTEDEECEEVKE</sequence>
<feature type="chain" id="PRO_1000139432" description="CTP synthase">
    <location>
        <begin position="1"/>
        <end position="547"/>
    </location>
</feature>
<feature type="domain" description="Glutamine amidotransferase type-1" evidence="1">
    <location>
        <begin position="292"/>
        <end position="534"/>
    </location>
</feature>
<feature type="region of interest" description="Amidoligase domain" evidence="1">
    <location>
        <begin position="1"/>
        <end position="267"/>
    </location>
</feature>
<feature type="active site" description="Nucleophile; for glutamine hydrolysis" evidence="1">
    <location>
        <position position="381"/>
    </location>
</feature>
<feature type="active site" evidence="1">
    <location>
        <position position="507"/>
    </location>
</feature>
<feature type="active site" evidence="1">
    <location>
        <position position="509"/>
    </location>
</feature>
<feature type="binding site" evidence="1">
    <location>
        <position position="13"/>
    </location>
    <ligand>
        <name>CTP</name>
        <dbReference type="ChEBI" id="CHEBI:37563"/>
        <note>allosteric inhibitor</note>
    </ligand>
</feature>
<feature type="binding site" evidence="1">
    <location>
        <position position="13"/>
    </location>
    <ligand>
        <name>UTP</name>
        <dbReference type="ChEBI" id="CHEBI:46398"/>
    </ligand>
</feature>
<feature type="binding site" evidence="1">
    <location>
        <begin position="14"/>
        <end position="19"/>
    </location>
    <ligand>
        <name>ATP</name>
        <dbReference type="ChEBI" id="CHEBI:30616"/>
    </ligand>
</feature>
<feature type="binding site" evidence="1">
    <location>
        <position position="71"/>
    </location>
    <ligand>
        <name>ATP</name>
        <dbReference type="ChEBI" id="CHEBI:30616"/>
    </ligand>
</feature>
<feature type="binding site" evidence="1">
    <location>
        <position position="71"/>
    </location>
    <ligand>
        <name>Mg(2+)</name>
        <dbReference type="ChEBI" id="CHEBI:18420"/>
    </ligand>
</feature>
<feature type="binding site" evidence="1">
    <location>
        <position position="141"/>
    </location>
    <ligand>
        <name>Mg(2+)</name>
        <dbReference type="ChEBI" id="CHEBI:18420"/>
    </ligand>
</feature>
<feature type="binding site" evidence="1">
    <location>
        <begin position="148"/>
        <end position="150"/>
    </location>
    <ligand>
        <name>CTP</name>
        <dbReference type="ChEBI" id="CHEBI:37563"/>
        <note>allosteric inhibitor</note>
    </ligand>
</feature>
<feature type="binding site" evidence="1">
    <location>
        <begin position="188"/>
        <end position="193"/>
    </location>
    <ligand>
        <name>CTP</name>
        <dbReference type="ChEBI" id="CHEBI:37563"/>
        <note>allosteric inhibitor</note>
    </ligand>
</feature>
<feature type="binding site" evidence="1">
    <location>
        <begin position="188"/>
        <end position="193"/>
    </location>
    <ligand>
        <name>UTP</name>
        <dbReference type="ChEBI" id="CHEBI:46398"/>
    </ligand>
</feature>
<feature type="binding site" evidence="1">
    <location>
        <position position="224"/>
    </location>
    <ligand>
        <name>CTP</name>
        <dbReference type="ChEBI" id="CHEBI:37563"/>
        <note>allosteric inhibitor</note>
    </ligand>
</feature>
<feature type="binding site" evidence="1">
    <location>
        <position position="224"/>
    </location>
    <ligand>
        <name>UTP</name>
        <dbReference type="ChEBI" id="CHEBI:46398"/>
    </ligand>
</feature>
<feature type="binding site" evidence="1">
    <location>
        <position position="354"/>
    </location>
    <ligand>
        <name>L-glutamine</name>
        <dbReference type="ChEBI" id="CHEBI:58359"/>
    </ligand>
</feature>
<feature type="binding site" evidence="1">
    <location>
        <begin position="382"/>
        <end position="385"/>
    </location>
    <ligand>
        <name>L-glutamine</name>
        <dbReference type="ChEBI" id="CHEBI:58359"/>
    </ligand>
</feature>
<feature type="binding site" evidence="1">
    <location>
        <position position="405"/>
    </location>
    <ligand>
        <name>L-glutamine</name>
        <dbReference type="ChEBI" id="CHEBI:58359"/>
    </ligand>
</feature>
<feature type="binding site" evidence="1">
    <location>
        <position position="462"/>
    </location>
    <ligand>
        <name>L-glutamine</name>
        <dbReference type="ChEBI" id="CHEBI:58359"/>
    </ligand>
</feature>
<name>PYRG_RIPO1</name>
<protein>
    <recommendedName>
        <fullName evidence="1">CTP synthase</fullName>
        <ecNumber evidence="1">6.3.4.2</ecNumber>
    </recommendedName>
    <alternativeName>
        <fullName evidence="1">Cytidine 5'-triphosphate synthase</fullName>
    </alternativeName>
    <alternativeName>
        <fullName evidence="1">Cytidine triphosphate synthetase</fullName>
        <shortName evidence="1">CTP synthetase</shortName>
        <shortName evidence="1">CTPS</shortName>
    </alternativeName>
    <alternativeName>
        <fullName evidence="1">UTP--ammonia ligase</fullName>
    </alternativeName>
</protein>
<evidence type="ECO:0000255" key="1">
    <source>
        <dbReference type="HAMAP-Rule" id="MF_01227"/>
    </source>
</evidence>